<keyword id="KW-0255">Endonuclease</keyword>
<keyword id="KW-0378">Hydrolase</keyword>
<keyword id="KW-0540">Nuclease</keyword>
<keyword id="KW-0694">RNA-binding</keyword>
<keyword id="KW-0819">tRNA processing</keyword>
<sequence>MQKIRSIKKNWEFQAIINKKNQIVTNYLIFYYVKSDFFEIGISVPKKFANAVKRNYYKRQIKNALYILWKKGEIFLNFRVVLIARKNFLPLSFETKYQKLAKIFKELKRNEK</sequence>
<evidence type="ECO:0000255" key="1">
    <source>
        <dbReference type="HAMAP-Rule" id="MF_00227"/>
    </source>
</evidence>
<name>RNPA_MESHJ</name>
<reference key="1">
    <citation type="journal article" date="2005" name="J. Bacteriol.">
        <title>Swine and poultry pathogens: the complete genome sequences of two strains of Mycoplasma hyopneumoniae and a strain of Mycoplasma synoviae.</title>
        <authorList>
            <person name="Vasconcelos A.T.R."/>
            <person name="Ferreira H.B."/>
            <person name="Bizarro C.V."/>
            <person name="Bonatto S.L."/>
            <person name="Carvalho M.O."/>
            <person name="Pinto P.M."/>
            <person name="Almeida D.F."/>
            <person name="Almeida L.G.P."/>
            <person name="Almeida R."/>
            <person name="Alves-Junior L."/>
            <person name="Assuncao E.N."/>
            <person name="Azevedo V.A.C."/>
            <person name="Bogo M.R."/>
            <person name="Brigido M.M."/>
            <person name="Brocchi M."/>
            <person name="Burity H.A."/>
            <person name="Camargo A.A."/>
            <person name="Camargo S.S."/>
            <person name="Carepo M.S."/>
            <person name="Carraro D.M."/>
            <person name="de Mattos Cascardo J.C."/>
            <person name="Castro L.A."/>
            <person name="Cavalcanti G."/>
            <person name="Chemale G."/>
            <person name="Collevatti R.G."/>
            <person name="Cunha C.W."/>
            <person name="Dallagiovanna B."/>
            <person name="Dambros B.P."/>
            <person name="Dellagostin O.A."/>
            <person name="Falcao C."/>
            <person name="Fantinatti-Garboggini F."/>
            <person name="Felipe M.S.S."/>
            <person name="Fiorentin L."/>
            <person name="Franco G.R."/>
            <person name="Freitas N.S.A."/>
            <person name="Frias D."/>
            <person name="Grangeiro T.B."/>
            <person name="Grisard E.C."/>
            <person name="Guimaraes C.T."/>
            <person name="Hungria M."/>
            <person name="Jardim S.N."/>
            <person name="Krieger M.A."/>
            <person name="Laurino J.P."/>
            <person name="Lima L.F.A."/>
            <person name="Lopes M.I."/>
            <person name="Loreto E.L.S."/>
            <person name="Madeira H.M.F."/>
            <person name="Manfio G.P."/>
            <person name="Maranhao A.Q."/>
            <person name="Martinkovics C.T."/>
            <person name="Medeiros S.R.B."/>
            <person name="Moreira M.A.M."/>
            <person name="Neiva M."/>
            <person name="Ramalho-Neto C.E."/>
            <person name="Nicolas M.F."/>
            <person name="Oliveira S.C."/>
            <person name="Paixao R.F.C."/>
            <person name="Pedrosa F.O."/>
            <person name="Pena S.D.J."/>
            <person name="Pereira M."/>
            <person name="Pereira-Ferrari L."/>
            <person name="Piffer I."/>
            <person name="Pinto L.S."/>
            <person name="Potrich D.P."/>
            <person name="Salim A.C.M."/>
            <person name="Santos F.R."/>
            <person name="Schmitt R."/>
            <person name="Schneider M.P.C."/>
            <person name="Schrank A."/>
            <person name="Schrank I.S."/>
            <person name="Schuck A.F."/>
            <person name="Seuanez H.N."/>
            <person name="Silva D.W."/>
            <person name="Silva R."/>
            <person name="Silva S.C."/>
            <person name="Soares C.M.A."/>
            <person name="Souza K.R.L."/>
            <person name="Souza R.C."/>
            <person name="Staats C.C."/>
            <person name="Steffens M.B.R."/>
            <person name="Teixeira S.M.R."/>
            <person name="Urmenyi T.P."/>
            <person name="Vainstein M.H."/>
            <person name="Zuccherato L.W."/>
            <person name="Simpson A.J.G."/>
            <person name="Zaha A."/>
        </authorList>
    </citation>
    <scope>NUCLEOTIDE SEQUENCE [LARGE SCALE GENOMIC DNA]</scope>
    <source>
        <strain>J / ATCC 25934 / NCTC 10110</strain>
    </source>
</reference>
<comment type="function">
    <text evidence="1">RNaseP catalyzes the removal of the 5'-leader sequence from pre-tRNA to produce the mature 5'-terminus. It can also cleave other RNA substrates such as 4.5S RNA. The protein component plays an auxiliary but essential role in vivo by binding to the 5'-leader sequence and broadening the substrate specificity of the ribozyme.</text>
</comment>
<comment type="catalytic activity">
    <reaction evidence="1">
        <text>Endonucleolytic cleavage of RNA, removing 5'-extranucleotides from tRNA precursor.</text>
        <dbReference type="EC" id="3.1.26.5"/>
    </reaction>
</comment>
<comment type="subunit">
    <text evidence="1">Consists of a catalytic RNA component (M1 or rnpB) and a protein subunit.</text>
</comment>
<comment type="similarity">
    <text evidence="1">Belongs to the RnpA family.</text>
</comment>
<proteinExistence type="inferred from homology"/>
<feature type="chain" id="PRO_1000021429" description="Ribonuclease P protein component">
    <location>
        <begin position="1"/>
        <end position="112"/>
    </location>
</feature>
<organism>
    <name type="scientific">Mesomycoplasma hyopneumoniae (strain J / ATCC 25934 / NCTC 10110)</name>
    <name type="common">Mycoplasma hyopneumoniae</name>
    <dbReference type="NCBI Taxonomy" id="262719"/>
    <lineage>
        <taxon>Bacteria</taxon>
        <taxon>Bacillati</taxon>
        <taxon>Mycoplasmatota</taxon>
        <taxon>Mycoplasmoidales</taxon>
        <taxon>Metamycoplasmataceae</taxon>
        <taxon>Mesomycoplasma</taxon>
    </lineage>
</organism>
<dbReference type="EC" id="3.1.26.5" evidence="1"/>
<dbReference type="EMBL" id="AE017243">
    <property type="protein sequence ID" value="AAZ44758.1"/>
    <property type="molecule type" value="Genomic_DNA"/>
</dbReference>
<dbReference type="RefSeq" id="WP_011284394.1">
    <property type="nucleotide sequence ID" value="NC_007295.1"/>
</dbReference>
<dbReference type="SMR" id="Q4A913"/>
<dbReference type="GeneID" id="41334979"/>
<dbReference type="KEGG" id="mhj:MHJ_0675"/>
<dbReference type="eggNOG" id="COG0594">
    <property type="taxonomic scope" value="Bacteria"/>
</dbReference>
<dbReference type="HOGENOM" id="CLU_117179_9_1_14"/>
<dbReference type="OrthoDB" id="9810867at2"/>
<dbReference type="Proteomes" id="UP000000548">
    <property type="component" value="Chromosome"/>
</dbReference>
<dbReference type="GO" id="GO:0030677">
    <property type="term" value="C:ribonuclease P complex"/>
    <property type="evidence" value="ECO:0007669"/>
    <property type="project" value="TreeGrafter"/>
</dbReference>
<dbReference type="GO" id="GO:0042781">
    <property type="term" value="F:3'-tRNA processing endoribonuclease activity"/>
    <property type="evidence" value="ECO:0007669"/>
    <property type="project" value="TreeGrafter"/>
</dbReference>
<dbReference type="GO" id="GO:0004526">
    <property type="term" value="F:ribonuclease P activity"/>
    <property type="evidence" value="ECO:0007669"/>
    <property type="project" value="UniProtKB-UniRule"/>
</dbReference>
<dbReference type="GO" id="GO:0000049">
    <property type="term" value="F:tRNA binding"/>
    <property type="evidence" value="ECO:0007669"/>
    <property type="project" value="UniProtKB-UniRule"/>
</dbReference>
<dbReference type="GO" id="GO:0001682">
    <property type="term" value="P:tRNA 5'-leader removal"/>
    <property type="evidence" value="ECO:0007669"/>
    <property type="project" value="UniProtKB-UniRule"/>
</dbReference>
<dbReference type="Gene3D" id="3.30.230.10">
    <property type="match status" value="1"/>
</dbReference>
<dbReference type="HAMAP" id="MF_00227">
    <property type="entry name" value="RNase_P"/>
    <property type="match status" value="1"/>
</dbReference>
<dbReference type="InterPro" id="IPR020568">
    <property type="entry name" value="Ribosomal_Su5_D2-typ_SF"/>
</dbReference>
<dbReference type="InterPro" id="IPR014721">
    <property type="entry name" value="Ribsml_uS5_D2-typ_fold_subgr"/>
</dbReference>
<dbReference type="InterPro" id="IPR000100">
    <property type="entry name" value="RNase_P"/>
</dbReference>
<dbReference type="NCBIfam" id="TIGR00188">
    <property type="entry name" value="rnpA"/>
    <property type="match status" value="1"/>
</dbReference>
<dbReference type="PANTHER" id="PTHR33992">
    <property type="entry name" value="RIBONUCLEASE P PROTEIN COMPONENT"/>
    <property type="match status" value="1"/>
</dbReference>
<dbReference type="PANTHER" id="PTHR33992:SF1">
    <property type="entry name" value="RIBONUCLEASE P PROTEIN COMPONENT"/>
    <property type="match status" value="1"/>
</dbReference>
<dbReference type="Pfam" id="PF00825">
    <property type="entry name" value="Ribonuclease_P"/>
    <property type="match status" value="1"/>
</dbReference>
<dbReference type="SUPFAM" id="SSF54211">
    <property type="entry name" value="Ribosomal protein S5 domain 2-like"/>
    <property type="match status" value="1"/>
</dbReference>
<accession>Q4A913</accession>
<protein>
    <recommendedName>
        <fullName evidence="1">Ribonuclease P protein component</fullName>
        <shortName evidence="1">RNase P protein</shortName>
        <shortName evidence="1">RNaseP protein</shortName>
        <ecNumber evidence="1">3.1.26.5</ecNumber>
    </recommendedName>
    <alternativeName>
        <fullName evidence="1">Protein C5</fullName>
    </alternativeName>
</protein>
<gene>
    <name evidence="1" type="primary">rnpA</name>
    <name type="ordered locus">MHJ_0675</name>
</gene>